<keyword id="KW-0004">4Fe-4S</keyword>
<keyword id="KW-0963">Cytoplasm</keyword>
<keyword id="KW-0408">Iron</keyword>
<keyword id="KW-0411">Iron-sulfur</keyword>
<keyword id="KW-0479">Metal-binding</keyword>
<keyword id="KW-0949">S-adenosyl-L-methionine</keyword>
<keyword id="KW-0808">Transferase</keyword>
<keyword id="KW-0819">tRNA processing</keyword>
<gene>
    <name evidence="1" type="primary">miaB</name>
    <name type="ordered locus">RPA0448</name>
</gene>
<accession>Q6NCM4</accession>
<proteinExistence type="inferred from homology"/>
<name>MIAB_RHOPA</name>
<dbReference type="EC" id="2.8.4.3" evidence="1"/>
<dbReference type="EMBL" id="BX572594">
    <property type="protein sequence ID" value="CAE25892.1"/>
    <property type="molecule type" value="Genomic_DNA"/>
</dbReference>
<dbReference type="RefSeq" id="WP_011156016.1">
    <property type="nucleotide sequence ID" value="NZ_CP116810.1"/>
</dbReference>
<dbReference type="SMR" id="Q6NCM4"/>
<dbReference type="STRING" id="258594.RPA0448"/>
<dbReference type="GeneID" id="66891463"/>
<dbReference type="eggNOG" id="COG0621">
    <property type="taxonomic scope" value="Bacteria"/>
</dbReference>
<dbReference type="HOGENOM" id="CLU_018697_2_2_5"/>
<dbReference type="PhylomeDB" id="Q6NCM4"/>
<dbReference type="GO" id="GO:0005829">
    <property type="term" value="C:cytosol"/>
    <property type="evidence" value="ECO:0007669"/>
    <property type="project" value="TreeGrafter"/>
</dbReference>
<dbReference type="GO" id="GO:0051539">
    <property type="term" value="F:4 iron, 4 sulfur cluster binding"/>
    <property type="evidence" value="ECO:0007669"/>
    <property type="project" value="UniProtKB-UniRule"/>
</dbReference>
<dbReference type="GO" id="GO:0046872">
    <property type="term" value="F:metal ion binding"/>
    <property type="evidence" value="ECO:0007669"/>
    <property type="project" value="UniProtKB-KW"/>
</dbReference>
<dbReference type="GO" id="GO:0035597">
    <property type="term" value="F:N6-isopentenyladenosine methylthiotransferase activity"/>
    <property type="evidence" value="ECO:0007669"/>
    <property type="project" value="TreeGrafter"/>
</dbReference>
<dbReference type="CDD" id="cd01335">
    <property type="entry name" value="Radical_SAM"/>
    <property type="match status" value="1"/>
</dbReference>
<dbReference type="FunFam" id="3.40.50.12160:FF:000003">
    <property type="entry name" value="CDK5 regulatory subunit-associated protein 1"/>
    <property type="match status" value="1"/>
</dbReference>
<dbReference type="FunFam" id="3.80.30.20:FF:000001">
    <property type="entry name" value="tRNA-2-methylthio-N(6)-dimethylallyladenosine synthase 2"/>
    <property type="match status" value="1"/>
</dbReference>
<dbReference type="Gene3D" id="3.40.50.12160">
    <property type="entry name" value="Methylthiotransferase, N-terminal domain"/>
    <property type="match status" value="1"/>
</dbReference>
<dbReference type="Gene3D" id="3.80.30.20">
    <property type="entry name" value="tm_1862 like domain"/>
    <property type="match status" value="1"/>
</dbReference>
<dbReference type="HAMAP" id="MF_01864">
    <property type="entry name" value="tRNA_metthiotr_MiaB"/>
    <property type="match status" value="1"/>
</dbReference>
<dbReference type="InterPro" id="IPR006638">
    <property type="entry name" value="Elp3/MiaA/NifB-like_rSAM"/>
</dbReference>
<dbReference type="InterPro" id="IPR005839">
    <property type="entry name" value="Methylthiotransferase"/>
</dbReference>
<dbReference type="InterPro" id="IPR020612">
    <property type="entry name" value="Methylthiotransferase_CS"/>
</dbReference>
<dbReference type="InterPro" id="IPR013848">
    <property type="entry name" value="Methylthiotransferase_N"/>
</dbReference>
<dbReference type="InterPro" id="IPR038135">
    <property type="entry name" value="Methylthiotransferase_N_sf"/>
</dbReference>
<dbReference type="InterPro" id="IPR006463">
    <property type="entry name" value="MiaB_methiolase"/>
</dbReference>
<dbReference type="InterPro" id="IPR007197">
    <property type="entry name" value="rSAM"/>
</dbReference>
<dbReference type="InterPro" id="IPR023404">
    <property type="entry name" value="rSAM_horseshoe"/>
</dbReference>
<dbReference type="InterPro" id="IPR002792">
    <property type="entry name" value="TRAM_dom"/>
</dbReference>
<dbReference type="NCBIfam" id="TIGR01574">
    <property type="entry name" value="miaB-methiolase"/>
    <property type="match status" value="1"/>
</dbReference>
<dbReference type="NCBIfam" id="TIGR00089">
    <property type="entry name" value="MiaB/RimO family radical SAM methylthiotransferase"/>
    <property type="match status" value="1"/>
</dbReference>
<dbReference type="PANTHER" id="PTHR43020">
    <property type="entry name" value="CDK5 REGULATORY SUBUNIT-ASSOCIATED PROTEIN 1"/>
    <property type="match status" value="1"/>
</dbReference>
<dbReference type="PANTHER" id="PTHR43020:SF2">
    <property type="entry name" value="MITOCHONDRIAL TRNA METHYLTHIOTRANSFERASE CDK5RAP1"/>
    <property type="match status" value="1"/>
</dbReference>
<dbReference type="Pfam" id="PF04055">
    <property type="entry name" value="Radical_SAM"/>
    <property type="match status" value="1"/>
</dbReference>
<dbReference type="Pfam" id="PF01938">
    <property type="entry name" value="TRAM"/>
    <property type="match status" value="1"/>
</dbReference>
<dbReference type="Pfam" id="PF00919">
    <property type="entry name" value="UPF0004"/>
    <property type="match status" value="1"/>
</dbReference>
<dbReference type="SFLD" id="SFLDF00273">
    <property type="entry name" value="(dimethylallyl)adenosine_tRNA"/>
    <property type="match status" value="1"/>
</dbReference>
<dbReference type="SFLD" id="SFLDG01082">
    <property type="entry name" value="B12-binding_domain_containing"/>
    <property type="match status" value="1"/>
</dbReference>
<dbReference type="SFLD" id="SFLDS00029">
    <property type="entry name" value="Radical_SAM"/>
    <property type="match status" value="1"/>
</dbReference>
<dbReference type="SMART" id="SM00729">
    <property type="entry name" value="Elp3"/>
    <property type="match status" value="1"/>
</dbReference>
<dbReference type="SUPFAM" id="SSF102114">
    <property type="entry name" value="Radical SAM enzymes"/>
    <property type="match status" value="1"/>
</dbReference>
<dbReference type="PROSITE" id="PS51449">
    <property type="entry name" value="MTTASE_N"/>
    <property type="match status" value="1"/>
</dbReference>
<dbReference type="PROSITE" id="PS01278">
    <property type="entry name" value="MTTASE_RADICAL"/>
    <property type="match status" value="1"/>
</dbReference>
<dbReference type="PROSITE" id="PS51918">
    <property type="entry name" value="RADICAL_SAM"/>
    <property type="match status" value="1"/>
</dbReference>
<dbReference type="PROSITE" id="PS50926">
    <property type="entry name" value="TRAM"/>
    <property type="match status" value="1"/>
</dbReference>
<evidence type="ECO:0000255" key="1">
    <source>
        <dbReference type="HAMAP-Rule" id="MF_01864"/>
    </source>
</evidence>
<evidence type="ECO:0000255" key="2">
    <source>
        <dbReference type="PROSITE-ProRule" id="PRU01266"/>
    </source>
</evidence>
<feature type="chain" id="PRO_0000374493" description="tRNA-2-methylthio-N(6)-dimethylallyladenosine synthase">
    <location>
        <begin position="1"/>
        <end position="463"/>
    </location>
</feature>
<feature type="domain" description="MTTase N-terminal" evidence="1">
    <location>
        <begin position="5"/>
        <end position="125"/>
    </location>
</feature>
<feature type="domain" description="Radical SAM core" evidence="2">
    <location>
        <begin position="152"/>
        <end position="384"/>
    </location>
</feature>
<feature type="domain" description="TRAM" evidence="1">
    <location>
        <begin position="387"/>
        <end position="449"/>
    </location>
</feature>
<feature type="binding site" evidence="1">
    <location>
        <position position="14"/>
    </location>
    <ligand>
        <name>[4Fe-4S] cluster</name>
        <dbReference type="ChEBI" id="CHEBI:49883"/>
        <label>1</label>
    </ligand>
</feature>
<feature type="binding site" evidence="1">
    <location>
        <position position="50"/>
    </location>
    <ligand>
        <name>[4Fe-4S] cluster</name>
        <dbReference type="ChEBI" id="CHEBI:49883"/>
        <label>1</label>
    </ligand>
</feature>
<feature type="binding site" evidence="1">
    <location>
        <position position="88"/>
    </location>
    <ligand>
        <name>[4Fe-4S] cluster</name>
        <dbReference type="ChEBI" id="CHEBI:49883"/>
        <label>1</label>
    </ligand>
</feature>
<feature type="binding site" evidence="1">
    <location>
        <position position="166"/>
    </location>
    <ligand>
        <name>[4Fe-4S] cluster</name>
        <dbReference type="ChEBI" id="CHEBI:49883"/>
        <label>2</label>
        <note>4Fe-4S-S-AdoMet</note>
    </ligand>
</feature>
<feature type="binding site" evidence="1">
    <location>
        <position position="170"/>
    </location>
    <ligand>
        <name>[4Fe-4S] cluster</name>
        <dbReference type="ChEBI" id="CHEBI:49883"/>
        <label>2</label>
        <note>4Fe-4S-S-AdoMet</note>
    </ligand>
</feature>
<feature type="binding site" evidence="1">
    <location>
        <position position="173"/>
    </location>
    <ligand>
        <name>[4Fe-4S] cluster</name>
        <dbReference type="ChEBI" id="CHEBI:49883"/>
        <label>2</label>
        <note>4Fe-4S-S-AdoMet</note>
    </ligand>
</feature>
<organism>
    <name type="scientific">Rhodopseudomonas palustris (strain ATCC BAA-98 / CGA009)</name>
    <dbReference type="NCBI Taxonomy" id="258594"/>
    <lineage>
        <taxon>Bacteria</taxon>
        <taxon>Pseudomonadati</taxon>
        <taxon>Pseudomonadota</taxon>
        <taxon>Alphaproteobacteria</taxon>
        <taxon>Hyphomicrobiales</taxon>
        <taxon>Nitrobacteraceae</taxon>
        <taxon>Rhodopseudomonas</taxon>
    </lineage>
</organism>
<sequence>MSPPRKLHIKSYGCQMNVYDAQRMVDALAPEGFVETANVDDADLVILNTCHIREKASEKVYSELGRLRVARDEAANHGRRMQIAVAGCVAQAEGAEIIRRAPVVDVVVGPQSYHNLPQLLAKAEQHGRALETEFPIEDKFGVLPQPAPDAIRARGISAFVTVQEGCDKFCTFCVVPYTRGAEMSRPVAAIVEDVKRLAENGVREVTLIGQNVNAYHGDGPDRLAWSLGRLVRRLAEIPGIVRLRYSTSHPNDVNDDLLAAHRDLPALMPFVHLPVQSGSDRILAAMNRKHTADDYRRVIDRFRLASEAIAFSSDFIVGFPGETERDFSATLALVAQIGYAGAYSFKYSPRPGTPAADMAEMVPAAVMDERLEQLQQLIDQQQSAFNKAAIGRTVEVLFERAGRKPGQIVGRTAYLQPAHVMAPDSIIGKVLPVRVDSLERYSLLGELASATSRPADAMAATGA</sequence>
<comment type="function">
    <text evidence="1">Catalyzes the methylthiolation of N6-(dimethylallyl)adenosine (i(6)A), leading to the formation of 2-methylthio-N6-(dimethylallyl)adenosine (ms(2)i(6)A) at position 37 in tRNAs that read codons beginning with uridine.</text>
</comment>
<comment type="catalytic activity">
    <reaction evidence="1">
        <text>N(6)-dimethylallyladenosine(37) in tRNA + (sulfur carrier)-SH + AH2 + 2 S-adenosyl-L-methionine = 2-methylsulfanyl-N(6)-dimethylallyladenosine(37) in tRNA + (sulfur carrier)-H + 5'-deoxyadenosine + L-methionine + A + S-adenosyl-L-homocysteine + 2 H(+)</text>
        <dbReference type="Rhea" id="RHEA:37067"/>
        <dbReference type="Rhea" id="RHEA-COMP:10375"/>
        <dbReference type="Rhea" id="RHEA-COMP:10376"/>
        <dbReference type="Rhea" id="RHEA-COMP:14737"/>
        <dbReference type="Rhea" id="RHEA-COMP:14739"/>
        <dbReference type="ChEBI" id="CHEBI:13193"/>
        <dbReference type="ChEBI" id="CHEBI:15378"/>
        <dbReference type="ChEBI" id="CHEBI:17319"/>
        <dbReference type="ChEBI" id="CHEBI:17499"/>
        <dbReference type="ChEBI" id="CHEBI:29917"/>
        <dbReference type="ChEBI" id="CHEBI:57844"/>
        <dbReference type="ChEBI" id="CHEBI:57856"/>
        <dbReference type="ChEBI" id="CHEBI:59789"/>
        <dbReference type="ChEBI" id="CHEBI:64428"/>
        <dbReference type="ChEBI" id="CHEBI:74415"/>
        <dbReference type="ChEBI" id="CHEBI:74417"/>
        <dbReference type="EC" id="2.8.4.3"/>
    </reaction>
</comment>
<comment type="cofactor">
    <cofactor evidence="1">
        <name>[4Fe-4S] cluster</name>
        <dbReference type="ChEBI" id="CHEBI:49883"/>
    </cofactor>
    <text evidence="1">Binds 2 [4Fe-4S] clusters. One cluster is coordinated with 3 cysteines and an exchangeable S-adenosyl-L-methionine.</text>
</comment>
<comment type="subunit">
    <text evidence="1">Monomer.</text>
</comment>
<comment type="subcellular location">
    <subcellularLocation>
        <location evidence="1">Cytoplasm</location>
    </subcellularLocation>
</comment>
<comment type="similarity">
    <text evidence="1">Belongs to the methylthiotransferase family. MiaB subfamily.</text>
</comment>
<reference key="1">
    <citation type="journal article" date="2004" name="Nat. Biotechnol.">
        <title>Complete genome sequence of the metabolically versatile photosynthetic bacterium Rhodopseudomonas palustris.</title>
        <authorList>
            <person name="Larimer F.W."/>
            <person name="Chain P."/>
            <person name="Hauser L."/>
            <person name="Lamerdin J.E."/>
            <person name="Malfatti S."/>
            <person name="Do L."/>
            <person name="Land M.L."/>
            <person name="Pelletier D.A."/>
            <person name="Beatty J.T."/>
            <person name="Lang A.S."/>
            <person name="Tabita F.R."/>
            <person name="Gibson J.L."/>
            <person name="Hanson T.E."/>
            <person name="Bobst C."/>
            <person name="Torres y Torres J.L."/>
            <person name="Peres C."/>
            <person name="Harrison F.H."/>
            <person name="Gibson J."/>
            <person name="Harwood C.S."/>
        </authorList>
    </citation>
    <scope>NUCLEOTIDE SEQUENCE [LARGE SCALE GENOMIC DNA]</scope>
    <source>
        <strain>ATCC BAA-98 / CGA009</strain>
    </source>
</reference>
<protein>
    <recommendedName>
        <fullName evidence="1">tRNA-2-methylthio-N(6)-dimethylallyladenosine synthase</fullName>
        <ecNumber evidence="1">2.8.4.3</ecNumber>
    </recommendedName>
    <alternativeName>
        <fullName evidence="1">(Dimethylallyl)adenosine tRNA methylthiotransferase MiaB</fullName>
    </alternativeName>
    <alternativeName>
        <fullName evidence="1">tRNA-i(6)A37 methylthiotransferase</fullName>
    </alternativeName>
</protein>